<gene>
    <name type="primary">CSRP2</name>
</gene>
<organism>
    <name type="scientific">Bos taurus</name>
    <name type="common">Bovine</name>
    <dbReference type="NCBI Taxonomy" id="9913"/>
    <lineage>
        <taxon>Eukaryota</taxon>
        <taxon>Metazoa</taxon>
        <taxon>Chordata</taxon>
        <taxon>Craniata</taxon>
        <taxon>Vertebrata</taxon>
        <taxon>Euteleostomi</taxon>
        <taxon>Mammalia</taxon>
        <taxon>Eutheria</taxon>
        <taxon>Laurasiatheria</taxon>
        <taxon>Artiodactyla</taxon>
        <taxon>Ruminantia</taxon>
        <taxon>Pecora</taxon>
        <taxon>Bovidae</taxon>
        <taxon>Bovinae</taxon>
        <taxon>Bos</taxon>
    </lineage>
</organism>
<name>CSRP2_BOVIN</name>
<protein>
    <recommendedName>
        <fullName>Cysteine and glycine-rich protein 2</fullName>
    </recommendedName>
    <alternativeName>
        <fullName>Cysteine-rich protein 2</fullName>
        <shortName>CRP2</shortName>
    </alternativeName>
</protein>
<feature type="chain" id="PRO_0000247315" description="Cysteine and glycine-rich protein 2">
    <location>
        <begin position="1"/>
        <end position="193"/>
    </location>
</feature>
<feature type="domain" description="LIM zinc-binding 1" evidence="7">
    <location>
        <begin position="10"/>
        <end position="61"/>
    </location>
</feature>
<feature type="domain" description="LIM zinc-binding 2" evidence="7">
    <location>
        <begin position="119"/>
        <end position="170"/>
    </location>
</feature>
<feature type="short sequence motif" description="Nuclear localization signal" evidence="6">
    <location>
        <begin position="64"/>
        <end position="69"/>
    </location>
</feature>
<feature type="modified residue" description="N6-acetyllysine" evidence="3">
    <location>
        <position position="112"/>
    </location>
</feature>
<feature type="modified residue" description="N6-acetyllysine" evidence="2">
    <location>
        <position position="131"/>
    </location>
</feature>
<feature type="modified residue" description="N6-acetyllysine; alternate" evidence="4">
    <location>
        <position position="137"/>
    </location>
</feature>
<feature type="modified residue" description="N6-succinyllysine; alternate" evidence="3">
    <location>
        <position position="137"/>
    </location>
</feature>
<feature type="modified residue" description="N6-acetyllysine" evidence="4">
    <location>
        <position position="161"/>
    </location>
</feature>
<feature type="cross-link" description="Glycyl lysine isopeptide (Lys-Gly) (interchain with G-Cter in SUMO2)" evidence="5">
    <location>
        <position position="91"/>
    </location>
</feature>
<accession>Q32LE9</accession>
<proteinExistence type="evidence at transcript level"/>
<comment type="function">
    <text evidence="1">Drastically down-regulated in response to PDGF-BB or cell injury, that promote smooth muscle cell proliferation and dedifferentiation. Seems to play a role in the development of the embryonic vascular system (By similarity).</text>
</comment>
<comment type="subunit">
    <text evidence="1">Interacts with KAT14. The LIM domain 1 is necessary and sufficient for this interaction (By similarity). Interacts with GLRX3 (By similarity).</text>
</comment>
<comment type="subcellular location">
    <subcellularLocation>
        <location evidence="1">Nucleus</location>
    </subcellularLocation>
</comment>
<reference key="1">
    <citation type="submission" date="2005-11" db="EMBL/GenBank/DDBJ databases">
        <authorList>
            <consortium name="NIH - Mammalian Gene Collection (MGC) project"/>
        </authorList>
    </citation>
    <scope>NUCLEOTIDE SEQUENCE [LARGE SCALE MRNA]</scope>
    <source>
        <strain>Crossbred X Angus</strain>
        <tissue>Liver</tissue>
    </source>
</reference>
<evidence type="ECO:0000250" key="1"/>
<evidence type="ECO:0000250" key="2">
    <source>
        <dbReference type="UniProtKB" id="P21291"/>
    </source>
</evidence>
<evidence type="ECO:0000250" key="3">
    <source>
        <dbReference type="UniProtKB" id="P97314"/>
    </source>
</evidence>
<evidence type="ECO:0000250" key="4">
    <source>
        <dbReference type="UniProtKB" id="P97315"/>
    </source>
</evidence>
<evidence type="ECO:0000250" key="5">
    <source>
        <dbReference type="UniProtKB" id="Q16527"/>
    </source>
</evidence>
<evidence type="ECO:0000255" key="6"/>
<evidence type="ECO:0000255" key="7">
    <source>
        <dbReference type="PROSITE-ProRule" id="PRU00125"/>
    </source>
</evidence>
<dbReference type="EMBL" id="BC109617">
    <property type="protein sequence ID" value="AAI09618.1"/>
    <property type="molecule type" value="mRNA"/>
</dbReference>
<dbReference type="RefSeq" id="NP_001033272.1">
    <property type="nucleotide sequence ID" value="NM_001038183.1"/>
</dbReference>
<dbReference type="SMR" id="Q32LE9"/>
<dbReference type="FunCoup" id="Q32LE9">
    <property type="interactions" value="208"/>
</dbReference>
<dbReference type="STRING" id="9913.ENSBTAP00000017835"/>
<dbReference type="PaxDb" id="9913-ENSBTAP00000017835"/>
<dbReference type="PeptideAtlas" id="Q32LE9"/>
<dbReference type="GeneID" id="539381"/>
<dbReference type="KEGG" id="bta:539381"/>
<dbReference type="CTD" id="1466"/>
<dbReference type="eggNOG" id="KOG1700">
    <property type="taxonomic scope" value="Eukaryota"/>
</dbReference>
<dbReference type="HOGENOM" id="CLU_054591_1_0_1"/>
<dbReference type="InParanoid" id="Q32LE9"/>
<dbReference type="OrthoDB" id="8062037at2759"/>
<dbReference type="TreeFam" id="TF313758"/>
<dbReference type="Proteomes" id="UP000009136">
    <property type="component" value="Unplaced"/>
</dbReference>
<dbReference type="GO" id="GO:0005737">
    <property type="term" value="C:cytoplasm"/>
    <property type="evidence" value="ECO:0000318"/>
    <property type="project" value="GO_Central"/>
</dbReference>
<dbReference type="GO" id="GO:0005634">
    <property type="term" value="C:nucleus"/>
    <property type="evidence" value="ECO:0000318"/>
    <property type="project" value="GO_Central"/>
</dbReference>
<dbReference type="GO" id="GO:0030018">
    <property type="term" value="C:Z disc"/>
    <property type="evidence" value="ECO:0000318"/>
    <property type="project" value="GO_Central"/>
</dbReference>
<dbReference type="GO" id="GO:0042805">
    <property type="term" value="F:actinin binding"/>
    <property type="evidence" value="ECO:0000318"/>
    <property type="project" value="GO_Central"/>
</dbReference>
<dbReference type="GO" id="GO:0046872">
    <property type="term" value="F:metal ion binding"/>
    <property type="evidence" value="ECO:0007669"/>
    <property type="project" value="UniProtKB-KW"/>
</dbReference>
<dbReference type="GO" id="GO:0008307">
    <property type="term" value="F:structural constituent of muscle"/>
    <property type="evidence" value="ECO:0000318"/>
    <property type="project" value="GO_Central"/>
</dbReference>
<dbReference type="GO" id="GO:0060537">
    <property type="term" value="P:muscle tissue development"/>
    <property type="evidence" value="ECO:0000318"/>
    <property type="project" value="GO_Central"/>
</dbReference>
<dbReference type="GO" id="GO:0045214">
    <property type="term" value="P:sarcomere organization"/>
    <property type="evidence" value="ECO:0000318"/>
    <property type="project" value="GO_Central"/>
</dbReference>
<dbReference type="CDD" id="cd09480">
    <property type="entry name" value="LIM1_CRP2"/>
    <property type="match status" value="1"/>
</dbReference>
<dbReference type="CDD" id="cd09840">
    <property type="entry name" value="LIM2_CRP2"/>
    <property type="match status" value="1"/>
</dbReference>
<dbReference type="FunFam" id="2.10.110.10:FF:000001">
    <property type="entry name" value="Cysteine and glycine-rich protein 1"/>
    <property type="match status" value="2"/>
</dbReference>
<dbReference type="Gene3D" id="2.10.110.10">
    <property type="entry name" value="Cysteine Rich Protein"/>
    <property type="match status" value="2"/>
</dbReference>
<dbReference type="InterPro" id="IPR001781">
    <property type="entry name" value="Znf_LIM"/>
</dbReference>
<dbReference type="PANTHER" id="PTHR24215:SF3">
    <property type="entry name" value="CYSTEINE AND GLYCINE-RICH PROTEIN 2"/>
    <property type="match status" value="1"/>
</dbReference>
<dbReference type="PANTHER" id="PTHR24215">
    <property type="entry name" value="RHO-GTPASE-ACTIVATING PROTEIN LRG1"/>
    <property type="match status" value="1"/>
</dbReference>
<dbReference type="Pfam" id="PF00412">
    <property type="entry name" value="LIM"/>
    <property type="match status" value="2"/>
</dbReference>
<dbReference type="SMART" id="SM00132">
    <property type="entry name" value="LIM"/>
    <property type="match status" value="2"/>
</dbReference>
<dbReference type="SUPFAM" id="SSF57716">
    <property type="entry name" value="Glucocorticoid receptor-like (DNA-binding domain)"/>
    <property type="match status" value="4"/>
</dbReference>
<dbReference type="PROSITE" id="PS00478">
    <property type="entry name" value="LIM_DOMAIN_1"/>
    <property type="match status" value="2"/>
</dbReference>
<dbReference type="PROSITE" id="PS50023">
    <property type="entry name" value="LIM_DOMAIN_2"/>
    <property type="match status" value="2"/>
</dbReference>
<keyword id="KW-0007">Acetylation</keyword>
<keyword id="KW-0217">Developmental protein</keyword>
<keyword id="KW-0221">Differentiation</keyword>
<keyword id="KW-1017">Isopeptide bond</keyword>
<keyword id="KW-0440">LIM domain</keyword>
<keyword id="KW-0479">Metal-binding</keyword>
<keyword id="KW-0539">Nucleus</keyword>
<keyword id="KW-1185">Reference proteome</keyword>
<keyword id="KW-0677">Repeat</keyword>
<keyword id="KW-0832">Ubl conjugation</keyword>
<keyword id="KW-0862">Zinc</keyword>
<sequence length="193" mass="20954">MPVWGGGNKCGACGRTVYHAEEVQCDGRSFHRCCFLCMVCRKNLDSTTVAIHDEEIYCKSCYGKKYGPKGYGYGQGAGTLNMDRGERLGIKPESVQPHRPTTNPNTSKFAQKYGGAEKCSRCGDSVYAAEKIIGAGKPWHKNCFRCAKCGKSLESTTLTEKEGEIYCKGCYAKNFGPKGFGYGQGAGALVHAQ</sequence>